<protein>
    <recommendedName>
        <fullName evidence="8">Fusicocca-1,10(14)-diene-8beta,16-diol C-9 hydroxylase</fullName>
        <ecNumber evidence="7">1.-.-.-</ecNumber>
    </recommendedName>
    <alternativeName>
        <fullName evidence="8">Cytochrome P450 monooxygenase PaP450-3</fullName>
    </alternativeName>
    <alternativeName>
        <fullName evidence="8">Fusicoccin A biosynthetic gene clusters protein 7</fullName>
    </alternativeName>
</protein>
<evidence type="ECO:0000250" key="1">
    <source>
        <dbReference type="UniProtKB" id="P04798"/>
    </source>
</evidence>
<evidence type="ECO:0000255" key="2"/>
<evidence type="ECO:0000255" key="3">
    <source>
        <dbReference type="PROSITE-ProRule" id="PRU00498"/>
    </source>
</evidence>
<evidence type="ECO:0000269" key="4">
    <source>
    </source>
</evidence>
<evidence type="ECO:0000269" key="5">
    <source>
    </source>
</evidence>
<evidence type="ECO:0000269" key="6">
    <source>
    </source>
</evidence>
<evidence type="ECO:0000269" key="7">
    <source>
    </source>
</evidence>
<evidence type="ECO:0000303" key="8">
    <source>
    </source>
</evidence>
<evidence type="ECO:0000305" key="9"/>
<comment type="function">
    <text evidence="4 5 6 7">Cytochrome P450 monooxygenase; part of the 2 gene clusters that mediate the biosynthesis of fusicoccins, diterpene glucosides that display phytohormone-like activity and function as potent activators of plasma membrane H(+)-ATPases in plants by modifying 14-3-3 proteins and cause the plant disease constriction canker (PubMed:22870285). The first step in the pathway is performed by the fusicoccadiene synthase PaFS that possesses both prenyl transferase and terpene cyclase activity, converting isopentenyl diphosphate and dimethylallyl diphosphate into geranylgeranyl diphosphate (GGDP) and successively converting GGDP into fusicocca-2,10(14)-diene, a precursor for fusicoccin H (PubMed:17360612). The second step is the oxidation at the C-8 position by the cytochrome P450 monooxygenase PaP450-2 to yield fusicocca-2,10(14)-diene-8-beta-ol (PubMed:22870285). The cytochrome P450 monooxygenase PaP450-1 then catalyzes the hydroxylation at the C-16 position to produce fusicocca-2,10(14)-diene-8-beta,16-diol (PubMed:22870285). The dioxygenase fc-dox then catalyzes the 16-oxydation of fusicocca-2,10(14)-diene-8-beta,16-diol to yield an aldehyde (8-beta-hydroxyfusicocca-1,10(14)-dien-16-al) (PubMed:21299202, PubMed:22870285). The short-chain dehydrogenase/reductase fc-sdr catalyzes the reduction of the aldehyde to yield fusicocca-1,10(14)-diene-8-beta,16-diol (PubMed:21299202, PubMed:22870285). The next step is the hydroxylation at C-9 performed by the cytochrome P450 monooxygenase PaP450-3 that leads to fusicoccin H aglycon which is glycosylated to fusicoccin H by the O-glycosyltransferase PaGT (PubMed:22870285). Hydroxylation at C-12 by the cytochrome P450 monooxygenase PaP450-4 leads then to the production of fusicoccin Q and is followed by methylation by the O-methyltransferase PaMT to yield fusicoccin P (PubMed:22870285). Fusicoccin P is further converted to fusicoccin J via prenylation by the O-glucose prenyltransferase PaPT (PubMed:22287087). Cytochrome P450 monooxygenase PaP450-5 then performs hydroxylation at C-19 to yield dideacetyl-fusicoccin A which is acetylated to 3'-O-deacetyl-fusicoccin A by the O-acetyltransferase PaAT-2 (PubMed:22870285). Finally, a another acetylation by the O-acetyltransferase PaAT-1 yields fusicoccin A (PubMed:22870285).</text>
</comment>
<comment type="cofactor">
    <cofactor evidence="1">
        <name>heme</name>
        <dbReference type="ChEBI" id="CHEBI:30413"/>
    </cofactor>
</comment>
<comment type="pathway">
    <text evidence="7">Mycotoxin biosynthesis.</text>
</comment>
<comment type="subcellular location">
    <subcellularLocation>
        <location evidence="2">Membrane</location>
        <topology evidence="2">Single-pass membrane protein</topology>
    </subcellularLocation>
</comment>
<comment type="similarity">
    <text evidence="9">Belongs to the cytochrome P450 family.</text>
</comment>
<organism>
    <name type="scientific">Phomopsis amygdali</name>
    <name type="common">Fusicoccum amygdali</name>
    <dbReference type="NCBI Taxonomy" id="1214568"/>
    <lineage>
        <taxon>Eukaryota</taxon>
        <taxon>Fungi</taxon>
        <taxon>Dikarya</taxon>
        <taxon>Ascomycota</taxon>
        <taxon>Pezizomycotina</taxon>
        <taxon>Sordariomycetes</taxon>
        <taxon>Sordariomycetidae</taxon>
        <taxon>Diaporthales</taxon>
        <taxon>Diaporthaceae</taxon>
        <taxon>Diaporthe</taxon>
    </lineage>
</organism>
<proteinExistence type="evidence at protein level"/>
<name>FC7_PHOAM</name>
<dbReference type="EC" id="1.-.-.-" evidence="7"/>
<dbReference type="EMBL" id="AB686273">
    <property type="protein sequence ID" value="BAM71032.1"/>
    <property type="molecule type" value="mRNA"/>
</dbReference>
<dbReference type="SMR" id="L0MYS5"/>
<dbReference type="GlyCosmos" id="L0MYS5">
    <property type="glycosylation" value="3 sites, No reported glycans"/>
</dbReference>
<dbReference type="GO" id="GO:0016020">
    <property type="term" value="C:membrane"/>
    <property type="evidence" value="ECO:0007669"/>
    <property type="project" value="UniProtKB-SubCell"/>
</dbReference>
<dbReference type="GO" id="GO:0020037">
    <property type="term" value="F:heme binding"/>
    <property type="evidence" value="ECO:0007669"/>
    <property type="project" value="InterPro"/>
</dbReference>
<dbReference type="GO" id="GO:0005506">
    <property type="term" value="F:iron ion binding"/>
    <property type="evidence" value="ECO:0007669"/>
    <property type="project" value="InterPro"/>
</dbReference>
<dbReference type="GO" id="GO:0004497">
    <property type="term" value="F:monooxygenase activity"/>
    <property type="evidence" value="ECO:0007669"/>
    <property type="project" value="UniProtKB-KW"/>
</dbReference>
<dbReference type="GO" id="GO:0016705">
    <property type="term" value="F:oxidoreductase activity, acting on paired donors, with incorporation or reduction of molecular oxygen"/>
    <property type="evidence" value="ECO:0007669"/>
    <property type="project" value="InterPro"/>
</dbReference>
<dbReference type="GO" id="GO:0019748">
    <property type="term" value="P:secondary metabolic process"/>
    <property type="evidence" value="ECO:0007669"/>
    <property type="project" value="UniProtKB-ARBA"/>
</dbReference>
<dbReference type="CDD" id="cd11041">
    <property type="entry name" value="CYP503A1-like"/>
    <property type="match status" value="1"/>
</dbReference>
<dbReference type="Gene3D" id="1.10.630.10">
    <property type="entry name" value="Cytochrome P450"/>
    <property type="match status" value="1"/>
</dbReference>
<dbReference type="InterPro" id="IPR001128">
    <property type="entry name" value="Cyt_P450"/>
</dbReference>
<dbReference type="InterPro" id="IPR017972">
    <property type="entry name" value="Cyt_P450_CS"/>
</dbReference>
<dbReference type="InterPro" id="IPR002403">
    <property type="entry name" value="Cyt_P450_E_grp-IV"/>
</dbReference>
<dbReference type="InterPro" id="IPR036396">
    <property type="entry name" value="Cyt_P450_sf"/>
</dbReference>
<dbReference type="PANTHER" id="PTHR46206">
    <property type="entry name" value="CYTOCHROME P450"/>
    <property type="match status" value="1"/>
</dbReference>
<dbReference type="PANTHER" id="PTHR46206:SF2">
    <property type="entry name" value="CYTOCHROME P450 MONOOXYGENASE AUSG-RELATED"/>
    <property type="match status" value="1"/>
</dbReference>
<dbReference type="Pfam" id="PF00067">
    <property type="entry name" value="p450"/>
    <property type="match status" value="1"/>
</dbReference>
<dbReference type="PRINTS" id="PR00465">
    <property type="entry name" value="EP450IV"/>
</dbReference>
<dbReference type="SUPFAM" id="SSF48264">
    <property type="entry name" value="Cytochrome P450"/>
    <property type="match status" value="1"/>
</dbReference>
<dbReference type="PROSITE" id="PS00086">
    <property type="entry name" value="CYTOCHROME_P450"/>
    <property type="match status" value="1"/>
</dbReference>
<keyword id="KW-0325">Glycoprotein</keyword>
<keyword id="KW-0349">Heme</keyword>
<keyword id="KW-0408">Iron</keyword>
<keyword id="KW-0472">Membrane</keyword>
<keyword id="KW-0479">Metal-binding</keyword>
<keyword id="KW-0503">Monooxygenase</keyword>
<keyword id="KW-0560">Oxidoreductase</keyword>
<keyword id="KW-0812">Transmembrane</keyword>
<keyword id="KW-1133">Transmembrane helix</keyword>
<reference key="1">
    <citation type="journal article" date="2012" name="PLoS ONE">
        <title>Molecular breeding of a fungus producing a precursor diterpene suitable for semi-synthesis by dissection of the biosynthetic machinery.</title>
        <authorList>
            <person name="Noike M."/>
            <person name="Ono Y."/>
            <person name="Araki Y."/>
            <person name="Tanio R."/>
            <person name="Higuchi Y."/>
            <person name="Nitta H."/>
            <person name="Hamano Y."/>
            <person name="Toyomasu T."/>
            <person name="Sassa T."/>
            <person name="Kato N."/>
            <person name="Dairi T."/>
        </authorList>
    </citation>
    <scope>NUCLEOTIDE SEQUENCE [MRNA]</scope>
    <scope>FUNCTION</scope>
    <scope>CATALYTIC ACTIVITY</scope>
    <scope>PATHWAY</scope>
</reference>
<reference key="2">
    <citation type="journal article" date="2007" name="Proc. Natl. Acad. Sci. U.S.A.">
        <title>Fusicoccins are biosynthesized by an unusual chimera diterpene synthase in fungi.</title>
        <authorList>
            <person name="Toyomasu T."/>
            <person name="Tsukahara M."/>
            <person name="Kaneko A."/>
            <person name="Niida R."/>
            <person name="Mitsuhashi W."/>
            <person name="Dairi T."/>
            <person name="Kato N."/>
            <person name="Sassa T."/>
        </authorList>
    </citation>
    <scope>FUNCTION</scope>
</reference>
<reference key="3">
    <citation type="journal article" date="2011" name="J. Am. Chem. Soc.">
        <title>Dioxygenases, key enzymes to determine the aglycon structures of fusicoccin and brassicicene, diterpene compounds produced by fungi.</title>
        <authorList>
            <person name="Ono Y."/>
            <person name="Minami A."/>
            <person name="Noike M."/>
            <person name="Higuchi Y."/>
            <person name="Toyomasu T."/>
            <person name="Sassa T."/>
            <person name="Kato N."/>
            <person name="Dairi T."/>
        </authorList>
    </citation>
    <scope>FUNCTION</scope>
</reference>
<reference key="4">
    <citation type="journal article" date="2012" name="ChemBioChem">
        <title>An enzyme catalyzing O-prenylation of the glucose moiety of fusicoccin A, a diterpene glucoside produced by the fungus Phomopsis amygdali.</title>
        <authorList>
            <person name="Noike M."/>
            <person name="Liu C."/>
            <person name="Ono Y."/>
            <person name="Hamano Y."/>
            <person name="Toyomasu T."/>
            <person name="Sassa T."/>
            <person name="Kato N."/>
            <person name="Dairi T."/>
        </authorList>
    </citation>
    <scope>FUNCTION</scope>
</reference>
<gene>
    <name evidence="8" type="primary">PaP450-3</name>
    <name evidence="8" type="synonym">orf7</name>
</gene>
<feature type="chain" id="PRO_0000445448" description="Fusicocca-1,10(14)-diene-8beta,16-diol C-9 hydroxylase">
    <location>
        <begin position="1"/>
        <end position="511"/>
    </location>
</feature>
<feature type="transmembrane region" description="Helical" evidence="2">
    <location>
        <begin position="7"/>
        <end position="29"/>
    </location>
</feature>
<feature type="binding site" description="axial binding residue" evidence="1">
    <location>
        <position position="450"/>
    </location>
    <ligand>
        <name>heme</name>
        <dbReference type="ChEBI" id="CHEBI:30413"/>
    </ligand>
    <ligandPart>
        <name>Fe</name>
        <dbReference type="ChEBI" id="CHEBI:18248"/>
    </ligandPart>
</feature>
<feature type="glycosylation site" description="N-linked (GlcNAc...) asparagine" evidence="3">
    <location>
        <position position="64"/>
    </location>
</feature>
<feature type="glycosylation site" description="N-linked (GlcNAc...) asparagine" evidence="3">
    <location>
        <position position="163"/>
    </location>
</feature>
<feature type="glycosylation site" description="N-linked (GlcNAc...) asparagine" evidence="3">
    <location>
        <position position="343"/>
    </location>
</feature>
<accession>L0MYS5</accession>
<sequence length="511" mass="57593">MLSTMDTVAALAAVFVAGTLLSRLASWIRYHFKIRKIPLAHNLGLLDRIFTRKATEEFAVDFKNLSRKGLAKDKNAFRVQTDFGEMVILGGHYAEEMKGDNGLSTGDYTKMELMGDIPGFEPFSFAGDHRELMHTVITKRLNRALPRLAIEQSVEVADFLSHNWTDSNEWHSIPLYQMLMGLVARASVSAFLGPELARNERWIELNAQYTVVGIGAVHALRPWPRFLLPLVHHFHPKAKAVRAILSECRQIMEPILRRRAQAKQGIQIKSAVSDTALDWFEEVAASIGQSYDPTVAQLTFAVAAMHSTTDHLCQILIDLRDKTEVVAAARSELVDVVTREGWNQTALSQLKLMESIMKESQRMKPINRVINKRIVTEDLHLSNDVFLPKGSFVAVSGERMHNPSIYEDPEQYDAYRFIKKAEEGPESARFSGYTSITTDSVGFGYGKHSCPGRSYVSQEMKVILSHILLKYDFRFPEGYQPKGVNNGFDSITDIMASCMIRRRAEEVKLPG</sequence>